<dbReference type="EMBL" id="X16591">
    <property type="protein sequence ID" value="CAA34603.1"/>
    <property type="molecule type" value="mRNA"/>
</dbReference>
<dbReference type="EMBL" id="M86643">
    <property type="protein sequence ID" value="AAA51420.1"/>
    <property type="molecule type" value="Genomic_DNA"/>
</dbReference>
<dbReference type="SMR" id="P62299"/>
<dbReference type="STRING" id="6280.P62299"/>
<dbReference type="GO" id="GO:0022627">
    <property type="term" value="C:cytosolic small ribosomal subunit"/>
    <property type="evidence" value="ECO:0007669"/>
    <property type="project" value="TreeGrafter"/>
</dbReference>
<dbReference type="GO" id="GO:0005730">
    <property type="term" value="C:nucleolus"/>
    <property type="evidence" value="ECO:0007669"/>
    <property type="project" value="TreeGrafter"/>
</dbReference>
<dbReference type="GO" id="GO:0070181">
    <property type="term" value="F:small ribosomal subunit rRNA binding"/>
    <property type="evidence" value="ECO:0007669"/>
    <property type="project" value="TreeGrafter"/>
</dbReference>
<dbReference type="GO" id="GO:0003735">
    <property type="term" value="F:structural constituent of ribosome"/>
    <property type="evidence" value="ECO:0007669"/>
    <property type="project" value="InterPro"/>
</dbReference>
<dbReference type="GO" id="GO:0006412">
    <property type="term" value="P:translation"/>
    <property type="evidence" value="ECO:0007669"/>
    <property type="project" value="InterPro"/>
</dbReference>
<dbReference type="CDD" id="cd00353">
    <property type="entry name" value="Ribosomal_S15p_S13e"/>
    <property type="match status" value="1"/>
</dbReference>
<dbReference type="FunFam" id="1.10.287.10:FF:000003">
    <property type="entry name" value="40S ribosomal protein S13"/>
    <property type="match status" value="1"/>
</dbReference>
<dbReference type="FunFam" id="4.10.860.130:FF:000001">
    <property type="entry name" value="40S ribosomal protein S13"/>
    <property type="match status" value="1"/>
</dbReference>
<dbReference type="Gene3D" id="4.10.860.130">
    <property type="match status" value="1"/>
</dbReference>
<dbReference type="Gene3D" id="1.10.287.10">
    <property type="entry name" value="S15/NS1, RNA-binding"/>
    <property type="match status" value="1"/>
</dbReference>
<dbReference type="HAMAP" id="MF_01343_A">
    <property type="entry name" value="Ribosomal_uS15_A"/>
    <property type="match status" value="1"/>
</dbReference>
<dbReference type="InterPro" id="IPR000589">
    <property type="entry name" value="Ribosomal_uS15"/>
</dbReference>
<dbReference type="InterPro" id="IPR023029">
    <property type="entry name" value="Ribosomal_uS15_arc_euk"/>
</dbReference>
<dbReference type="InterPro" id="IPR012606">
    <property type="entry name" value="Ribosomal_uS15_N"/>
</dbReference>
<dbReference type="InterPro" id="IPR009068">
    <property type="entry name" value="uS15_NS1_RNA-bd_sf"/>
</dbReference>
<dbReference type="NCBIfam" id="NF006331">
    <property type="entry name" value="PRK08561.1"/>
    <property type="match status" value="1"/>
</dbReference>
<dbReference type="PANTHER" id="PTHR11885">
    <property type="entry name" value="RIBOSOMAL PROTEIN S15P/S13E"/>
    <property type="match status" value="1"/>
</dbReference>
<dbReference type="PANTHER" id="PTHR11885:SF6">
    <property type="entry name" value="SMALL RIBOSOMAL SUBUNIT PROTEIN US15"/>
    <property type="match status" value="1"/>
</dbReference>
<dbReference type="Pfam" id="PF08069">
    <property type="entry name" value="Ribosomal_S13_N"/>
    <property type="match status" value="1"/>
</dbReference>
<dbReference type="Pfam" id="PF00312">
    <property type="entry name" value="Ribosomal_S15"/>
    <property type="match status" value="1"/>
</dbReference>
<dbReference type="SMART" id="SM01386">
    <property type="entry name" value="Ribosomal_S13_N"/>
    <property type="match status" value="1"/>
</dbReference>
<dbReference type="SMART" id="SM01387">
    <property type="entry name" value="Ribosomal_S15"/>
    <property type="match status" value="1"/>
</dbReference>
<dbReference type="SUPFAM" id="SSF47060">
    <property type="entry name" value="S15/NS1 RNA-binding domain"/>
    <property type="match status" value="1"/>
</dbReference>
<dbReference type="PROSITE" id="PS00362">
    <property type="entry name" value="RIBOSOMAL_S15"/>
    <property type="match status" value="1"/>
</dbReference>
<protein>
    <recommendedName>
        <fullName evidence="2">Small ribosomal subunit protein uS15</fullName>
    </recommendedName>
    <alternativeName>
        <fullName>17.4K protein</fullName>
    </alternativeName>
    <alternativeName>
        <fullName>40S ribosomal protein S13</fullName>
    </alternativeName>
</protein>
<evidence type="ECO:0000250" key="1"/>
<evidence type="ECO:0000305" key="2"/>
<name>RS13_BRUPA</name>
<feature type="initiator methionine" description="Removed" evidence="1">
    <location>
        <position position="1"/>
    </location>
</feature>
<feature type="chain" id="PRO_0000115670" description="Small ribosomal subunit protein uS15">
    <location>
        <begin position="2"/>
        <end position="151"/>
    </location>
</feature>
<keyword id="KW-0687">Ribonucleoprotein</keyword>
<keyword id="KW-0689">Ribosomal protein</keyword>
<sequence length="151" mass="17392">MGRMHNPGKGISQSALPYRRSVPTWLKLTSEEVQEQVTRLAKKGLRPSQIGVILRDSHGVAQVRRVTGNKIVRILKAKGMAPEIPEDLYHLIKKAVNIRKHLERNRKDKDSKYRLILVESRIHRLARYYKTKRQLPATWKYESSTASALVS</sequence>
<organism>
    <name type="scientific">Brugia pahangi</name>
    <name type="common">Filarial nematode worm</name>
    <dbReference type="NCBI Taxonomy" id="6280"/>
    <lineage>
        <taxon>Eukaryota</taxon>
        <taxon>Metazoa</taxon>
        <taxon>Ecdysozoa</taxon>
        <taxon>Nematoda</taxon>
        <taxon>Chromadorea</taxon>
        <taxon>Rhabditida</taxon>
        <taxon>Spirurina</taxon>
        <taxon>Spiruromorpha</taxon>
        <taxon>Filarioidea</taxon>
        <taxon>Onchocercidae</taxon>
        <taxon>Brugia</taxon>
    </lineage>
</organism>
<accession>P62299</accession>
<accession>P14015</accession>
<reference key="1">
    <citation type="journal article" date="1989" name="Nucleic Acids Res.">
        <title>Nucleotide sequence of Brugia pahangi 17.4 kD protein.</title>
        <authorList>
            <person name="Ellenberger D.L."/>
            <person name="Pieniazek N.J."/>
            <person name="Lammie P.J."/>
        </authorList>
    </citation>
    <scope>NUCLEOTIDE SEQUENCE [MRNA]</scope>
</reference>
<gene>
    <name type="primary">RPS13</name>
</gene>
<comment type="similarity">
    <text evidence="2">Belongs to the universal ribosomal protein uS15 family.</text>
</comment>
<proteinExistence type="evidence at transcript level"/>